<keyword id="KW-0963">Cytoplasm</keyword>
<keyword id="KW-0226">DNA condensation</keyword>
<keyword id="KW-0238">DNA-binding</keyword>
<keyword id="KW-0408">Iron</keyword>
<keyword id="KW-0409">Iron storage</keyword>
<keyword id="KW-0479">Metal-binding</keyword>
<keyword id="KW-0560">Oxidoreductase</keyword>
<evidence type="ECO:0000250" key="1"/>
<evidence type="ECO:0000255" key="2">
    <source>
        <dbReference type="HAMAP-Rule" id="MF_01441"/>
    </source>
</evidence>
<evidence type="ECO:0000305" key="3"/>
<reference key="1">
    <citation type="journal article" date="2006" name="Proc. Natl. Acad. Sci. U.S.A.">
        <title>Identification of genes subject to positive selection in uropathogenic strains of Escherichia coli: a comparative genomics approach.</title>
        <authorList>
            <person name="Chen S.L."/>
            <person name="Hung C.-S."/>
            <person name="Xu J."/>
            <person name="Reigstad C.S."/>
            <person name="Magrini V."/>
            <person name="Sabo A."/>
            <person name="Blasiar D."/>
            <person name="Bieri T."/>
            <person name="Meyer R.R."/>
            <person name="Ozersky P."/>
            <person name="Armstrong J.R."/>
            <person name="Fulton R.S."/>
            <person name="Latreille J.P."/>
            <person name="Spieth J."/>
            <person name="Hooton T.M."/>
            <person name="Mardis E.R."/>
            <person name="Hultgren S.J."/>
            <person name="Gordon J.I."/>
        </authorList>
    </citation>
    <scope>NUCLEOTIDE SEQUENCE [LARGE SCALE GENOMIC DNA]</scope>
    <source>
        <strain>UTI89 / UPEC</strain>
    </source>
</reference>
<accession>Q1REB2</accession>
<protein>
    <recommendedName>
        <fullName evidence="2">DNA protection during starvation protein</fullName>
        <ecNumber evidence="2">1.16.-.-</ecNumber>
    </recommendedName>
</protein>
<gene>
    <name evidence="2" type="primary">dps</name>
    <name type="ordered locus">UTI89_C0816</name>
</gene>
<feature type="initiator methionine" description="Removed" evidence="1">
    <location>
        <position position="1"/>
    </location>
</feature>
<feature type="chain" id="PRO_0000271583" description="DNA protection during starvation protein">
    <location>
        <begin position="2"/>
        <end position="167"/>
    </location>
</feature>
<feature type="binding site" evidence="2">
    <location>
        <position position="51"/>
    </location>
    <ligand>
        <name>Fe cation</name>
        <dbReference type="ChEBI" id="CHEBI:24875"/>
        <label>1</label>
        <note>ligand shared between two dodecameric partners</note>
    </ligand>
</feature>
<feature type="binding site" description="in other chain" evidence="2">
    <location>
        <position position="78"/>
    </location>
    <ligand>
        <name>Fe cation</name>
        <dbReference type="ChEBI" id="CHEBI:24875"/>
        <label>1</label>
        <note>ligand shared between two dodecameric partners</note>
    </ligand>
</feature>
<feature type="binding site" description="in other chain" evidence="2">
    <location>
        <position position="82"/>
    </location>
    <ligand>
        <name>Fe cation</name>
        <dbReference type="ChEBI" id="CHEBI:24875"/>
        <label>1</label>
        <note>ligand shared between two dodecameric partners</note>
    </ligand>
</feature>
<feature type="binding site" evidence="2">
    <location>
        <position position="82"/>
    </location>
    <ligand>
        <name>Fe cation</name>
        <dbReference type="ChEBI" id="CHEBI:24875"/>
        <label>2</label>
    </ligand>
</feature>
<sequence>MSTAKLVKSKATNLLYTRNDVSDSEKKATVELLNRQVIQFIDLSLITKQAHWNMRGANFIAVHEMLDGFRTALIDHLDTMAERAVQLGGVALGTTQVINSKTPLKSYPLDIHNVQDHLKELADRYAIVANDVRKAIGEAKDDDTADILTAASRDLDKFLWFIESNIE</sequence>
<organism>
    <name type="scientific">Escherichia coli (strain UTI89 / UPEC)</name>
    <dbReference type="NCBI Taxonomy" id="364106"/>
    <lineage>
        <taxon>Bacteria</taxon>
        <taxon>Pseudomonadati</taxon>
        <taxon>Pseudomonadota</taxon>
        <taxon>Gammaproteobacteria</taxon>
        <taxon>Enterobacterales</taxon>
        <taxon>Enterobacteriaceae</taxon>
        <taxon>Escherichia</taxon>
    </lineage>
</organism>
<name>DPS_ECOUT</name>
<comment type="function">
    <text evidence="2">During stationary phase, binds the chromosome non-specifically, forming a highly ordered and stable dps-DNA co-crystal within which chromosomal DNA is condensed and protected from diverse damages. It protects DNA from oxidative damage by sequestering intracellular Fe(2+) ion and storing it in the form of Fe(3+) oxyhydroxide mineral, which can be released after reduction. One hydrogen peroxide oxidizes two Fe(2+) ions, which prevents hydroxyl radical production by the Fenton reaction. Dps also protects the cell from UV and gamma irradiation, iron and copper toxicity, thermal stress and acid and base shocks. Also shows a weak catalase activity.</text>
</comment>
<comment type="catalytic activity">
    <reaction evidence="2">
        <text>2 Fe(2+) + H2O2 + 2 H(+) = 2 Fe(3+) + 2 H2O</text>
        <dbReference type="Rhea" id="RHEA:48712"/>
        <dbReference type="ChEBI" id="CHEBI:15377"/>
        <dbReference type="ChEBI" id="CHEBI:15378"/>
        <dbReference type="ChEBI" id="CHEBI:16240"/>
        <dbReference type="ChEBI" id="CHEBI:29033"/>
        <dbReference type="ChEBI" id="CHEBI:29034"/>
    </reaction>
</comment>
<comment type="subunit">
    <text evidence="2">Homododecamer. The 12 subunits form a hollow sphere into which the mineral iron core of up to 500 Fe(3+) can be deposited.</text>
</comment>
<comment type="subcellular location">
    <subcellularLocation>
        <location evidence="2">Cytoplasm</location>
        <location evidence="2">Nucleoid</location>
    </subcellularLocation>
</comment>
<comment type="similarity">
    <text evidence="2">Belongs to the Dps family.</text>
</comment>
<comment type="sequence caution" evidence="3">
    <conflict type="erroneous initiation">
        <sequence resource="EMBL-CDS" id="ABE06302"/>
    </conflict>
</comment>
<dbReference type="EC" id="1.16.-.-" evidence="2"/>
<dbReference type="EMBL" id="CP000243">
    <property type="protein sequence ID" value="ABE06302.1"/>
    <property type="status" value="ALT_INIT"/>
    <property type="molecule type" value="Genomic_DNA"/>
</dbReference>
<dbReference type="RefSeq" id="WP_000100800.1">
    <property type="nucleotide sequence ID" value="NZ_CP064825.1"/>
</dbReference>
<dbReference type="SMR" id="Q1REB2"/>
<dbReference type="GeneID" id="93776616"/>
<dbReference type="KEGG" id="eci:UTI89_C0816"/>
<dbReference type="HOGENOM" id="CLU_098183_1_2_6"/>
<dbReference type="Proteomes" id="UP000001952">
    <property type="component" value="Chromosome"/>
</dbReference>
<dbReference type="GO" id="GO:0005737">
    <property type="term" value="C:cytoplasm"/>
    <property type="evidence" value="ECO:0007669"/>
    <property type="project" value="UniProtKB-UniRule"/>
</dbReference>
<dbReference type="GO" id="GO:0009295">
    <property type="term" value="C:nucleoid"/>
    <property type="evidence" value="ECO:0007669"/>
    <property type="project" value="UniProtKB-SubCell"/>
</dbReference>
<dbReference type="GO" id="GO:0003677">
    <property type="term" value="F:DNA binding"/>
    <property type="evidence" value="ECO:0007669"/>
    <property type="project" value="UniProtKB-UniRule"/>
</dbReference>
<dbReference type="GO" id="GO:0008199">
    <property type="term" value="F:ferric iron binding"/>
    <property type="evidence" value="ECO:0007669"/>
    <property type="project" value="UniProtKB-UniRule"/>
</dbReference>
<dbReference type="GO" id="GO:0016722">
    <property type="term" value="F:oxidoreductase activity, acting on metal ions"/>
    <property type="evidence" value="ECO:0007669"/>
    <property type="project" value="InterPro"/>
</dbReference>
<dbReference type="GO" id="GO:0030261">
    <property type="term" value="P:chromosome condensation"/>
    <property type="evidence" value="ECO:0007669"/>
    <property type="project" value="UniProtKB-KW"/>
</dbReference>
<dbReference type="GO" id="GO:0006879">
    <property type="term" value="P:intracellular iron ion homeostasis"/>
    <property type="evidence" value="ECO:0007669"/>
    <property type="project" value="UniProtKB-KW"/>
</dbReference>
<dbReference type="CDD" id="cd01043">
    <property type="entry name" value="DPS"/>
    <property type="match status" value="1"/>
</dbReference>
<dbReference type="FunFam" id="1.20.1260.10:FF:000003">
    <property type="entry name" value="DNA protection during starvation protein"/>
    <property type="match status" value="1"/>
</dbReference>
<dbReference type="Gene3D" id="1.20.1260.10">
    <property type="match status" value="1"/>
</dbReference>
<dbReference type="HAMAP" id="MF_01441">
    <property type="entry name" value="Dps"/>
    <property type="match status" value="1"/>
</dbReference>
<dbReference type="InterPro" id="IPR002177">
    <property type="entry name" value="DPS_DNA-bd"/>
</dbReference>
<dbReference type="InterPro" id="IPR023188">
    <property type="entry name" value="DPS_DNA-bd_CS"/>
</dbReference>
<dbReference type="InterPro" id="IPR023067">
    <property type="entry name" value="Dps_gammaproteobac"/>
</dbReference>
<dbReference type="InterPro" id="IPR012347">
    <property type="entry name" value="Ferritin-like"/>
</dbReference>
<dbReference type="InterPro" id="IPR009078">
    <property type="entry name" value="Ferritin-like_SF"/>
</dbReference>
<dbReference type="InterPro" id="IPR008331">
    <property type="entry name" value="Ferritin_DPS_dom"/>
</dbReference>
<dbReference type="NCBIfam" id="NF006975">
    <property type="entry name" value="PRK09448.1"/>
    <property type="match status" value="1"/>
</dbReference>
<dbReference type="PANTHER" id="PTHR42932:SF3">
    <property type="entry name" value="DNA PROTECTION DURING STARVATION PROTEIN"/>
    <property type="match status" value="1"/>
</dbReference>
<dbReference type="PANTHER" id="PTHR42932">
    <property type="entry name" value="GENERAL STRESS PROTEIN 20U"/>
    <property type="match status" value="1"/>
</dbReference>
<dbReference type="Pfam" id="PF00210">
    <property type="entry name" value="Ferritin"/>
    <property type="match status" value="1"/>
</dbReference>
<dbReference type="PIRSF" id="PIRSF005900">
    <property type="entry name" value="Dps"/>
    <property type="match status" value="1"/>
</dbReference>
<dbReference type="PRINTS" id="PR01346">
    <property type="entry name" value="HELNAPAPROT"/>
</dbReference>
<dbReference type="SUPFAM" id="SSF47240">
    <property type="entry name" value="Ferritin-like"/>
    <property type="match status" value="1"/>
</dbReference>
<dbReference type="PROSITE" id="PS00818">
    <property type="entry name" value="DPS_1"/>
    <property type="match status" value="1"/>
</dbReference>
<dbReference type="PROSITE" id="PS00819">
    <property type="entry name" value="DPS_2"/>
    <property type="match status" value="1"/>
</dbReference>
<proteinExistence type="inferred from homology"/>